<organism>
    <name type="scientific">Vibrio parahaemolyticus serotype O3:K6 (strain RIMD 2210633)</name>
    <dbReference type="NCBI Taxonomy" id="223926"/>
    <lineage>
        <taxon>Bacteria</taxon>
        <taxon>Pseudomonadati</taxon>
        <taxon>Pseudomonadota</taxon>
        <taxon>Gammaproteobacteria</taxon>
        <taxon>Vibrionales</taxon>
        <taxon>Vibrionaceae</taxon>
        <taxon>Vibrio</taxon>
    </lineage>
</organism>
<proteinExistence type="inferred from homology"/>
<dbReference type="EC" id="6.3.2.2" evidence="1"/>
<dbReference type="EMBL" id="BA000031">
    <property type="protein sequence ID" value="BAC60802.1"/>
    <property type="molecule type" value="Genomic_DNA"/>
</dbReference>
<dbReference type="RefSeq" id="NP_798918.1">
    <property type="nucleotide sequence ID" value="NC_004603.1"/>
</dbReference>
<dbReference type="RefSeq" id="WP_005462538.1">
    <property type="nucleotide sequence ID" value="NC_004603.1"/>
</dbReference>
<dbReference type="SMR" id="Q87LS2"/>
<dbReference type="GeneID" id="1190054"/>
<dbReference type="KEGG" id="vpa:VP2539"/>
<dbReference type="PATRIC" id="fig|223926.6.peg.2436"/>
<dbReference type="eggNOG" id="COG2918">
    <property type="taxonomic scope" value="Bacteria"/>
</dbReference>
<dbReference type="HOGENOM" id="CLU_020728_3_0_6"/>
<dbReference type="UniPathway" id="UPA00142">
    <property type="reaction ID" value="UER00209"/>
</dbReference>
<dbReference type="Proteomes" id="UP000002493">
    <property type="component" value="Chromosome 1"/>
</dbReference>
<dbReference type="GO" id="GO:0005829">
    <property type="term" value="C:cytosol"/>
    <property type="evidence" value="ECO:0007669"/>
    <property type="project" value="TreeGrafter"/>
</dbReference>
<dbReference type="GO" id="GO:0005524">
    <property type="term" value="F:ATP binding"/>
    <property type="evidence" value="ECO:0007669"/>
    <property type="project" value="UniProtKB-KW"/>
</dbReference>
<dbReference type="GO" id="GO:0004357">
    <property type="term" value="F:glutamate-cysteine ligase activity"/>
    <property type="evidence" value="ECO:0007669"/>
    <property type="project" value="UniProtKB-UniRule"/>
</dbReference>
<dbReference type="GO" id="GO:0046872">
    <property type="term" value="F:metal ion binding"/>
    <property type="evidence" value="ECO:0007669"/>
    <property type="project" value="TreeGrafter"/>
</dbReference>
<dbReference type="GO" id="GO:0006750">
    <property type="term" value="P:glutathione biosynthetic process"/>
    <property type="evidence" value="ECO:0007669"/>
    <property type="project" value="UniProtKB-UniRule"/>
</dbReference>
<dbReference type="FunFam" id="3.30.590.20:FF:000001">
    <property type="entry name" value="Glutamate--cysteine ligase"/>
    <property type="match status" value="1"/>
</dbReference>
<dbReference type="Gene3D" id="3.30.590.20">
    <property type="match status" value="1"/>
</dbReference>
<dbReference type="HAMAP" id="MF_00578">
    <property type="entry name" value="Glu_cys_ligase"/>
    <property type="match status" value="1"/>
</dbReference>
<dbReference type="InterPro" id="IPR014746">
    <property type="entry name" value="Gln_synth/guanido_kin_cat_dom"/>
</dbReference>
<dbReference type="InterPro" id="IPR007370">
    <property type="entry name" value="Glu_cys_ligase"/>
</dbReference>
<dbReference type="InterPro" id="IPR006334">
    <property type="entry name" value="Glut_cys_ligase"/>
</dbReference>
<dbReference type="NCBIfam" id="TIGR01434">
    <property type="entry name" value="glu_cys_ligase"/>
    <property type="match status" value="1"/>
</dbReference>
<dbReference type="PANTHER" id="PTHR38761">
    <property type="entry name" value="GLUTAMATE--CYSTEINE LIGASE"/>
    <property type="match status" value="1"/>
</dbReference>
<dbReference type="PANTHER" id="PTHR38761:SF1">
    <property type="entry name" value="GLUTAMATE--CYSTEINE LIGASE"/>
    <property type="match status" value="1"/>
</dbReference>
<dbReference type="Pfam" id="PF04262">
    <property type="entry name" value="Glu_cys_ligase"/>
    <property type="match status" value="1"/>
</dbReference>
<dbReference type="SUPFAM" id="SSF55931">
    <property type="entry name" value="Glutamine synthetase/guanido kinase"/>
    <property type="match status" value="1"/>
</dbReference>
<comment type="catalytic activity">
    <reaction evidence="1">
        <text>L-cysteine + L-glutamate + ATP = gamma-L-glutamyl-L-cysteine + ADP + phosphate + H(+)</text>
        <dbReference type="Rhea" id="RHEA:13285"/>
        <dbReference type="ChEBI" id="CHEBI:15378"/>
        <dbReference type="ChEBI" id="CHEBI:29985"/>
        <dbReference type="ChEBI" id="CHEBI:30616"/>
        <dbReference type="ChEBI" id="CHEBI:35235"/>
        <dbReference type="ChEBI" id="CHEBI:43474"/>
        <dbReference type="ChEBI" id="CHEBI:58173"/>
        <dbReference type="ChEBI" id="CHEBI:456216"/>
        <dbReference type="EC" id="6.3.2.2"/>
    </reaction>
</comment>
<comment type="pathway">
    <text evidence="1">Sulfur metabolism; glutathione biosynthesis; glutathione from L-cysteine and L-glutamate: step 1/2.</text>
</comment>
<comment type="similarity">
    <text evidence="1">Belongs to the glutamate--cysteine ligase type 1 family. Type 1 subfamily.</text>
</comment>
<gene>
    <name evidence="1" type="primary">gshA</name>
    <name type="ordered locus">VP2539</name>
</gene>
<accession>Q87LS2</accession>
<feature type="chain" id="PRO_0000192543" description="Glutamate--cysteine ligase">
    <location>
        <begin position="1"/>
        <end position="522"/>
    </location>
</feature>
<sequence>MTDFAARLKKVASNPEVFKQFGRGVERETLRYRQDGHLATTPHPEGLGSAFTNKWITTDFSESLLEFITPVSHDIPELMAQLKDIHHFTQTKMGEEKMWPLSMPCYVGSEDDIQLAQYGSSNSAKMKTLYREGLKRRYGSLMQIISGVHFNFSFPESFWDALYGEQDEQARQDTKSAAYFALIRNYYRFGWMIPYFFGASPALCGSFIQGRETKLPFESIGGTLYLPKATSLRLSDLGYTNSAQSVLKIGFNSIDQYLEGLGDAIRRPSEEFAKIGVKVDGEYRQLNTNILQIENELYAPIRPKRVAKSGEKPSDALSRAGVEYIEVRSLDVNPFSAVGVSEEQVRFLDLFLTWAALSDSDPMDNCELECWRDNWNKVIISGREKGLMLQIGCQGERLSLQDWAKRVFVELRQIAVEMDSAAGGDAYQAVCDKLEAWIDNPELTISGQLLELTKELGGLGKVGCALGMKFREENLAHGYQHYSQDIMETEVASSVEKQRKAEESDTLSFDEFLENYFAYLKQ</sequence>
<reference key="1">
    <citation type="journal article" date="2003" name="Lancet">
        <title>Genome sequence of Vibrio parahaemolyticus: a pathogenic mechanism distinct from that of V. cholerae.</title>
        <authorList>
            <person name="Makino K."/>
            <person name="Oshima K."/>
            <person name="Kurokawa K."/>
            <person name="Yokoyama K."/>
            <person name="Uda T."/>
            <person name="Tagomori K."/>
            <person name="Iijima Y."/>
            <person name="Najima M."/>
            <person name="Nakano M."/>
            <person name="Yamashita A."/>
            <person name="Kubota Y."/>
            <person name="Kimura S."/>
            <person name="Yasunaga T."/>
            <person name="Honda T."/>
            <person name="Shinagawa H."/>
            <person name="Hattori M."/>
            <person name="Iida T."/>
        </authorList>
    </citation>
    <scope>NUCLEOTIDE SEQUENCE [LARGE SCALE GENOMIC DNA]</scope>
    <source>
        <strain>RIMD 2210633</strain>
    </source>
</reference>
<keyword id="KW-0067">ATP-binding</keyword>
<keyword id="KW-0317">Glutathione biosynthesis</keyword>
<keyword id="KW-0436">Ligase</keyword>
<keyword id="KW-0547">Nucleotide-binding</keyword>
<protein>
    <recommendedName>
        <fullName evidence="1">Glutamate--cysteine ligase</fullName>
        <ecNumber evidence="1">6.3.2.2</ecNumber>
    </recommendedName>
    <alternativeName>
        <fullName evidence="1">Gamma-ECS</fullName>
        <shortName evidence="1">GCS</shortName>
    </alternativeName>
    <alternativeName>
        <fullName evidence="1">Gamma-glutamylcysteine synthetase</fullName>
    </alternativeName>
</protein>
<name>GSH1_VIBPA</name>
<evidence type="ECO:0000255" key="1">
    <source>
        <dbReference type="HAMAP-Rule" id="MF_00578"/>
    </source>
</evidence>